<comment type="function">
    <text evidence="1">Converts heme B (protoheme IX) to heme O by substitution of the vinyl group on carbon 2 of heme B porphyrin ring with a hydroxyethyl farnesyl side group.</text>
</comment>
<comment type="catalytic activity">
    <reaction evidence="1">
        <text>heme b + (2E,6E)-farnesyl diphosphate + H2O = Fe(II)-heme o + diphosphate</text>
        <dbReference type="Rhea" id="RHEA:28070"/>
        <dbReference type="ChEBI" id="CHEBI:15377"/>
        <dbReference type="ChEBI" id="CHEBI:33019"/>
        <dbReference type="ChEBI" id="CHEBI:60344"/>
        <dbReference type="ChEBI" id="CHEBI:60530"/>
        <dbReference type="ChEBI" id="CHEBI:175763"/>
        <dbReference type="EC" id="2.5.1.141"/>
    </reaction>
</comment>
<comment type="pathway">
    <text evidence="1">Porphyrin-containing compound metabolism; heme O biosynthesis; heme O from protoheme: step 1/1.</text>
</comment>
<comment type="subcellular location">
    <subcellularLocation>
        <location evidence="1">Cell inner membrane</location>
        <topology evidence="1">Multi-pass membrane protein</topology>
    </subcellularLocation>
</comment>
<comment type="miscellaneous">
    <text evidence="1">Carbon 2 of the heme B porphyrin ring is defined according to the Fischer nomenclature.</text>
</comment>
<comment type="similarity">
    <text evidence="1">Belongs to the UbiA prenyltransferase family. Protoheme IX farnesyltransferase subfamily.</text>
</comment>
<accession>Q2YCM2</accession>
<evidence type="ECO:0000255" key="1">
    <source>
        <dbReference type="HAMAP-Rule" id="MF_00154"/>
    </source>
</evidence>
<organism>
    <name type="scientific">Nitrosospira multiformis (strain ATCC 25196 / NCIMB 11849 / C 71)</name>
    <dbReference type="NCBI Taxonomy" id="323848"/>
    <lineage>
        <taxon>Bacteria</taxon>
        <taxon>Pseudomonadati</taxon>
        <taxon>Pseudomonadota</taxon>
        <taxon>Betaproteobacteria</taxon>
        <taxon>Nitrosomonadales</taxon>
        <taxon>Nitrosomonadaceae</taxon>
        <taxon>Nitrosospira</taxon>
    </lineage>
</organism>
<name>COXX_NITMU</name>
<sequence>MATTSIAWQQTASRVQQFYRLTKPRVVSLIVFTAVIGMFLSVPGVVPLDTLIFATVGIAFVAGAAAAVNCLVEQKIDAVMARTRGRPLPRGTVTSPETFVFLALVGGAGLLILHQLVNPLTMWLTLGTFVGYAIIYTVILKPMTPQNIVIGGASGAMPPVLGWAAVTGEVSADALLLFLIIFAWTPPHFWALALYRKLEYAKVGMPMLPVTHGDKFTRLHVLLYTLILIAVTLMPYATQMSGLIYLAGAIVLDVIFLYYAVKIYLNYSDQLARSAFRYSILYLAGLFAVLLVDHYIRF</sequence>
<reference key="1">
    <citation type="submission" date="2005-08" db="EMBL/GenBank/DDBJ databases">
        <title>Complete sequence of chromosome 1 of Nitrosospira multiformis ATCC 25196.</title>
        <authorList>
            <person name="Copeland A."/>
            <person name="Lucas S."/>
            <person name="Lapidus A."/>
            <person name="Barry K."/>
            <person name="Detter J.C."/>
            <person name="Glavina T."/>
            <person name="Hammon N."/>
            <person name="Israni S."/>
            <person name="Pitluck S."/>
            <person name="Chain P."/>
            <person name="Malfatti S."/>
            <person name="Shin M."/>
            <person name="Vergez L."/>
            <person name="Schmutz J."/>
            <person name="Larimer F."/>
            <person name="Land M."/>
            <person name="Hauser L."/>
            <person name="Kyrpides N."/>
            <person name="Lykidis A."/>
            <person name="Richardson P."/>
        </authorList>
    </citation>
    <scope>NUCLEOTIDE SEQUENCE [LARGE SCALE GENOMIC DNA]</scope>
    <source>
        <strain>ATCC 25196 / NCIMB 11849 / C 71</strain>
    </source>
</reference>
<feature type="chain" id="PRO_0000327101" description="Protoheme IX farnesyltransferase">
    <location>
        <begin position="1"/>
        <end position="298"/>
    </location>
</feature>
<feature type="transmembrane region" description="Helical" evidence="1">
    <location>
        <begin position="26"/>
        <end position="46"/>
    </location>
</feature>
<feature type="transmembrane region" description="Helical" evidence="1">
    <location>
        <begin position="52"/>
        <end position="72"/>
    </location>
</feature>
<feature type="transmembrane region" description="Helical" evidence="1">
    <location>
        <begin position="99"/>
        <end position="119"/>
    </location>
</feature>
<feature type="transmembrane region" description="Helical" evidence="1">
    <location>
        <begin position="120"/>
        <end position="140"/>
    </location>
</feature>
<feature type="transmembrane region" description="Helical" evidence="1">
    <location>
        <begin position="148"/>
        <end position="168"/>
    </location>
</feature>
<feature type="transmembrane region" description="Helical" evidence="1">
    <location>
        <begin position="174"/>
        <end position="194"/>
    </location>
</feature>
<feature type="transmembrane region" description="Helical" evidence="1">
    <location>
        <begin position="219"/>
        <end position="239"/>
    </location>
</feature>
<feature type="transmembrane region" description="Helical" evidence="1">
    <location>
        <begin position="241"/>
        <end position="261"/>
    </location>
</feature>
<feature type="transmembrane region" description="Helical" evidence="1">
    <location>
        <begin position="276"/>
        <end position="296"/>
    </location>
</feature>
<proteinExistence type="inferred from homology"/>
<protein>
    <recommendedName>
        <fullName evidence="1">Protoheme IX farnesyltransferase</fullName>
        <ecNumber evidence="1">2.5.1.141</ecNumber>
    </recommendedName>
    <alternativeName>
        <fullName evidence="1">Heme B farnesyltransferase</fullName>
    </alternativeName>
    <alternativeName>
        <fullName evidence="1">Heme O synthase</fullName>
    </alternativeName>
</protein>
<dbReference type="EC" id="2.5.1.141" evidence="1"/>
<dbReference type="EMBL" id="CP000103">
    <property type="protein sequence ID" value="ABB73499.1"/>
    <property type="molecule type" value="Genomic_DNA"/>
</dbReference>
<dbReference type="RefSeq" id="WP_011379553.1">
    <property type="nucleotide sequence ID" value="NC_007614.1"/>
</dbReference>
<dbReference type="SMR" id="Q2YCM2"/>
<dbReference type="STRING" id="323848.Nmul_A0191"/>
<dbReference type="KEGG" id="nmu:Nmul_A0191"/>
<dbReference type="eggNOG" id="COG0109">
    <property type="taxonomic scope" value="Bacteria"/>
</dbReference>
<dbReference type="HOGENOM" id="CLU_029631_0_2_4"/>
<dbReference type="OrthoDB" id="9814417at2"/>
<dbReference type="UniPathway" id="UPA00834">
    <property type="reaction ID" value="UER00712"/>
</dbReference>
<dbReference type="Proteomes" id="UP000002718">
    <property type="component" value="Chromosome"/>
</dbReference>
<dbReference type="GO" id="GO:0005886">
    <property type="term" value="C:plasma membrane"/>
    <property type="evidence" value="ECO:0007669"/>
    <property type="project" value="UniProtKB-SubCell"/>
</dbReference>
<dbReference type="GO" id="GO:0008495">
    <property type="term" value="F:protoheme IX farnesyltransferase activity"/>
    <property type="evidence" value="ECO:0007669"/>
    <property type="project" value="UniProtKB-UniRule"/>
</dbReference>
<dbReference type="GO" id="GO:0048034">
    <property type="term" value="P:heme O biosynthetic process"/>
    <property type="evidence" value="ECO:0007669"/>
    <property type="project" value="UniProtKB-UniRule"/>
</dbReference>
<dbReference type="CDD" id="cd13957">
    <property type="entry name" value="PT_UbiA_Cox10"/>
    <property type="match status" value="1"/>
</dbReference>
<dbReference type="Gene3D" id="1.10.357.140">
    <property type="entry name" value="UbiA prenyltransferase"/>
    <property type="match status" value="1"/>
</dbReference>
<dbReference type="HAMAP" id="MF_00154">
    <property type="entry name" value="CyoE_CtaB"/>
    <property type="match status" value="1"/>
</dbReference>
<dbReference type="InterPro" id="IPR006369">
    <property type="entry name" value="Protohaem_IX_farnesylTrfase"/>
</dbReference>
<dbReference type="InterPro" id="IPR000537">
    <property type="entry name" value="UbiA_prenyltransferase"/>
</dbReference>
<dbReference type="InterPro" id="IPR030470">
    <property type="entry name" value="UbiA_prenylTrfase_CS"/>
</dbReference>
<dbReference type="InterPro" id="IPR044878">
    <property type="entry name" value="UbiA_sf"/>
</dbReference>
<dbReference type="NCBIfam" id="TIGR01473">
    <property type="entry name" value="cyoE_ctaB"/>
    <property type="match status" value="1"/>
</dbReference>
<dbReference type="NCBIfam" id="NF003349">
    <property type="entry name" value="PRK04375.1-2"/>
    <property type="match status" value="1"/>
</dbReference>
<dbReference type="PANTHER" id="PTHR43448:SF7">
    <property type="entry name" value="4-HYDROXYBENZOATE SOLANESYLTRANSFERASE"/>
    <property type="match status" value="1"/>
</dbReference>
<dbReference type="PANTHER" id="PTHR43448">
    <property type="entry name" value="PROTOHEME IX FARNESYLTRANSFERASE, MITOCHONDRIAL"/>
    <property type="match status" value="1"/>
</dbReference>
<dbReference type="Pfam" id="PF01040">
    <property type="entry name" value="UbiA"/>
    <property type="match status" value="1"/>
</dbReference>
<dbReference type="PROSITE" id="PS00943">
    <property type="entry name" value="UBIA"/>
    <property type="match status" value="1"/>
</dbReference>
<keyword id="KW-0997">Cell inner membrane</keyword>
<keyword id="KW-1003">Cell membrane</keyword>
<keyword id="KW-0350">Heme biosynthesis</keyword>
<keyword id="KW-0472">Membrane</keyword>
<keyword id="KW-1185">Reference proteome</keyword>
<keyword id="KW-0808">Transferase</keyword>
<keyword id="KW-0812">Transmembrane</keyword>
<keyword id="KW-1133">Transmembrane helix</keyword>
<gene>
    <name evidence="1" type="primary">ctaB</name>
    <name type="ordered locus">Nmul_A0191</name>
</gene>